<name>NDHI_ZALME</name>
<dbReference type="EC" id="7.1.1.-" evidence="1"/>
<dbReference type="EMBL" id="AF383872">
    <property type="protein sequence ID" value="AAN61813.1"/>
    <property type="molecule type" value="Genomic_DNA"/>
</dbReference>
<dbReference type="SMR" id="Q8HVJ1"/>
<dbReference type="GO" id="GO:0009535">
    <property type="term" value="C:chloroplast thylakoid membrane"/>
    <property type="evidence" value="ECO:0007669"/>
    <property type="project" value="UniProtKB-SubCell"/>
</dbReference>
<dbReference type="GO" id="GO:0051539">
    <property type="term" value="F:4 iron, 4 sulfur cluster binding"/>
    <property type="evidence" value="ECO:0007669"/>
    <property type="project" value="UniProtKB-KW"/>
</dbReference>
<dbReference type="GO" id="GO:0005506">
    <property type="term" value="F:iron ion binding"/>
    <property type="evidence" value="ECO:0007669"/>
    <property type="project" value="UniProtKB-UniRule"/>
</dbReference>
<dbReference type="GO" id="GO:0008137">
    <property type="term" value="F:NADH dehydrogenase (ubiquinone) activity"/>
    <property type="evidence" value="ECO:0007669"/>
    <property type="project" value="InterPro"/>
</dbReference>
<dbReference type="GO" id="GO:0048038">
    <property type="term" value="F:quinone binding"/>
    <property type="evidence" value="ECO:0007669"/>
    <property type="project" value="UniProtKB-KW"/>
</dbReference>
<dbReference type="GO" id="GO:0019684">
    <property type="term" value="P:photosynthesis, light reaction"/>
    <property type="evidence" value="ECO:0007669"/>
    <property type="project" value="UniProtKB-UniRule"/>
</dbReference>
<dbReference type="FunFam" id="3.30.70.3270:FF:000006">
    <property type="entry name" value="NAD(P)H-quinone oxidoreductase subunit I, chloroplastic"/>
    <property type="match status" value="1"/>
</dbReference>
<dbReference type="Gene3D" id="3.30.70.3270">
    <property type="match status" value="1"/>
</dbReference>
<dbReference type="HAMAP" id="MF_01351">
    <property type="entry name" value="NDH1_NuoI"/>
    <property type="match status" value="1"/>
</dbReference>
<dbReference type="InterPro" id="IPR017896">
    <property type="entry name" value="4Fe4S_Fe-S-bd"/>
</dbReference>
<dbReference type="InterPro" id="IPR017900">
    <property type="entry name" value="4Fe4S_Fe_S_CS"/>
</dbReference>
<dbReference type="InterPro" id="IPR010226">
    <property type="entry name" value="NADH_quinone_OxRdtase_chainI"/>
</dbReference>
<dbReference type="InterPro" id="IPR004497">
    <property type="entry name" value="NDHI"/>
</dbReference>
<dbReference type="NCBIfam" id="TIGR00403">
    <property type="entry name" value="ndhI"/>
    <property type="match status" value="1"/>
</dbReference>
<dbReference type="NCBIfam" id="TIGR01971">
    <property type="entry name" value="NuoI"/>
    <property type="match status" value="1"/>
</dbReference>
<dbReference type="NCBIfam" id="NF004537">
    <property type="entry name" value="PRK05888.1-3"/>
    <property type="match status" value="1"/>
</dbReference>
<dbReference type="PANTHER" id="PTHR47275">
    <property type="entry name" value="NAD(P)H-QUINONE OXIDOREDUCTASE SUBUNIT I, CHLOROPLASTIC"/>
    <property type="match status" value="1"/>
</dbReference>
<dbReference type="PANTHER" id="PTHR47275:SF1">
    <property type="entry name" value="NAD(P)H-QUINONE OXIDOREDUCTASE SUBUNIT I, CHLOROPLASTIC"/>
    <property type="match status" value="1"/>
</dbReference>
<dbReference type="Pfam" id="PF00037">
    <property type="entry name" value="Fer4"/>
    <property type="match status" value="2"/>
</dbReference>
<dbReference type="SUPFAM" id="SSF54862">
    <property type="entry name" value="4Fe-4S ferredoxins"/>
    <property type="match status" value="1"/>
</dbReference>
<dbReference type="PROSITE" id="PS00198">
    <property type="entry name" value="4FE4S_FER_1"/>
    <property type="match status" value="2"/>
</dbReference>
<dbReference type="PROSITE" id="PS51379">
    <property type="entry name" value="4FE4S_FER_2"/>
    <property type="match status" value="2"/>
</dbReference>
<evidence type="ECO:0000255" key="1">
    <source>
        <dbReference type="HAMAP-Rule" id="MF_01351"/>
    </source>
</evidence>
<organism>
    <name type="scientific">Zaluzania megacephala</name>
    <dbReference type="NCBI Taxonomy" id="183102"/>
    <lineage>
        <taxon>Eukaryota</taxon>
        <taxon>Viridiplantae</taxon>
        <taxon>Streptophyta</taxon>
        <taxon>Embryophyta</taxon>
        <taxon>Tracheophyta</taxon>
        <taxon>Spermatophyta</taxon>
        <taxon>Magnoliopsida</taxon>
        <taxon>eudicotyledons</taxon>
        <taxon>Gunneridae</taxon>
        <taxon>Pentapetalae</taxon>
        <taxon>asterids</taxon>
        <taxon>campanulids</taxon>
        <taxon>Asterales</taxon>
        <taxon>Asteraceae</taxon>
        <taxon>Asteroideae</taxon>
        <taxon>Heliantheae alliance</taxon>
        <taxon>Heliantheae</taxon>
        <taxon>Zaluzania</taxon>
    </lineage>
</organism>
<feature type="chain" id="PRO_0000250868" description="NAD(P)H-quinone oxidoreductase subunit I, chloroplastic">
    <location>
        <begin position="1"/>
        <end position="166"/>
    </location>
</feature>
<feature type="domain" description="4Fe-4S ferredoxin-type 1" evidence="1">
    <location>
        <begin position="55"/>
        <end position="84"/>
    </location>
</feature>
<feature type="domain" description="4Fe-4S ferredoxin-type 2" evidence="1">
    <location>
        <begin position="95"/>
        <end position="124"/>
    </location>
</feature>
<feature type="binding site" evidence="1">
    <location>
        <position position="64"/>
    </location>
    <ligand>
        <name>[4Fe-4S] cluster</name>
        <dbReference type="ChEBI" id="CHEBI:49883"/>
        <label>1</label>
    </ligand>
</feature>
<feature type="binding site" evidence="1">
    <location>
        <position position="67"/>
    </location>
    <ligand>
        <name>[4Fe-4S] cluster</name>
        <dbReference type="ChEBI" id="CHEBI:49883"/>
        <label>1</label>
    </ligand>
</feature>
<feature type="binding site" evidence="1">
    <location>
        <position position="70"/>
    </location>
    <ligand>
        <name>[4Fe-4S] cluster</name>
        <dbReference type="ChEBI" id="CHEBI:49883"/>
        <label>1</label>
    </ligand>
</feature>
<feature type="binding site" evidence="1">
    <location>
        <position position="74"/>
    </location>
    <ligand>
        <name>[4Fe-4S] cluster</name>
        <dbReference type="ChEBI" id="CHEBI:49883"/>
        <label>2</label>
    </ligand>
</feature>
<feature type="binding site" evidence="1">
    <location>
        <position position="104"/>
    </location>
    <ligand>
        <name>[4Fe-4S] cluster</name>
        <dbReference type="ChEBI" id="CHEBI:49883"/>
        <label>2</label>
    </ligand>
</feature>
<feature type="binding site" evidence="1">
    <location>
        <position position="107"/>
    </location>
    <ligand>
        <name>[4Fe-4S] cluster</name>
        <dbReference type="ChEBI" id="CHEBI:49883"/>
        <label>2</label>
    </ligand>
</feature>
<feature type="binding site" evidence="1">
    <location>
        <position position="110"/>
    </location>
    <ligand>
        <name>[4Fe-4S] cluster</name>
        <dbReference type="ChEBI" id="CHEBI:49883"/>
        <label>2</label>
    </ligand>
</feature>
<feature type="binding site" evidence="1">
    <location>
        <position position="114"/>
    </location>
    <ligand>
        <name>[4Fe-4S] cluster</name>
        <dbReference type="ChEBI" id="CHEBI:49883"/>
        <label>1</label>
    </ligand>
</feature>
<protein>
    <recommendedName>
        <fullName evidence="1">NAD(P)H-quinone oxidoreductase subunit I, chloroplastic</fullName>
        <ecNumber evidence="1">7.1.1.-</ecNumber>
    </recommendedName>
    <alternativeName>
        <fullName evidence="1">NAD(P)H dehydrogenase subunit I</fullName>
        <shortName evidence="1">NDH subunit I</shortName>
    </alternativeName>
    <alternativeName>
        <fullName evidence="1">NADH-plastoquinone oxidoreductase subunit I</fullName>
    </alternativeName>
</protein>
<proteinExistence type="inferred from homology"/>
<geneLocation type="chloroplast"/>
<gene>
    <name evidence="1" type="primary">ndhI</name>
</gene>
<reference key="1">
    <citation type="submission" date="2003-01" db="EMBL/GenBank/DDBJ databases">
        <title>Chloroplast DNA phylogeny of tribe Heliantheae (Asteraceae).</title>
        <authorList>
            <person name="Panero J.L."/>
            <person name="Baldwin B.G."/>
            <person name="Schilling E.E."/>
            <person name="Clevinger J.A."/>
        </authorList>
    </citation>
    <scope>NUCLEOTIDE SEQUENCE [GENOMIC DNA]</scope>
</reference>
<accession>Q8HVJ1</accession>
<comment type="function">
    <text evidence="1">NDH shuttles electrons from NAD(P)H:plastoquinone, via FMN and iron-sulfur (Fe-S) centers, to quinones in the photosynthetic chain and possibly in a chloroplast respiratory chain. The immediate electron acceptor for the enzyme in this species is believed to be plastoquinone. Couples the redox reaction to proton translocation, and thus conserves the redox energy in a proton gradient.</text>
</comment>
<comment type="catalytic activity">
    <reaction evidence="1">
        <text>a plastoquinone + NADH + (n+1) H(+)(in) = a plastoquinol + NAD(+) + n H(+)(out)</text>
        <dbReference type="Rhea" id="RHEA:42608"/>
        <dbReference type="Rhea" id="RHEA-COMP:9561"/>
        <dbReference type="Rhea" id="RHEA-COMP:9562"/>
        <dbReference type="ChEBI" id="CHEBI:15378"/>
        <dbReference type="ChEBI" id="CHEBI:17757"/>
        <dbReference type="ChEBI" id="CHEBI:57540"/>
        <dbReference type="ChEBI" id="CHEBI:57945"/>
        <dbReference type="ChEBI" id="CHEBI:62192"/>
    </reaction>
</comment>
<comment type="catalytic activity">
    <reaction evidence="1">
        <text>a plastoquinone + NADPH + (n+1) H(+)(in) = a plastoquinol + NADP(+) + n H(+)(out)</text>
        <dbReference type="Rhea" id="RHEA:42612"/>
        <dbReference type="Rhea" id="RHEA-COMP:9561"/>
        <dbReference type="Rhea" id="RHEA-COMP:9562"/>
        <dbReference type="ChEBI" id="CHEBI:15378"/>
        <dbReference type="ChEBI" id="CHEBI:17757"/>
        <dbReference type="ChEBI" id="CHEBI:57783"/>
        <dbReference type="ChEBI" id="CHEBI:58349"/>
        <dbReference type="ChEBI" id="CHEBI:62192"/>
    </reaction>
</comment>
<comment type="cofactor">
    <cofactor evidence="1">
        <name>[4Fe-4S] cluster</name>
        <dbReference type="ChEBI" id="CHEBI:49883"/>
    </cofactor>
    <text evidence="1">Binds 2 [4Fe-4S] clusters per subunit.</text>
</comment>
<comment type="subunit">
    <text evidence="1">NDH is composed of at least 16 different subunits, 5 of which are encoded in the nucleus.</text>
</comment>
<comment type="subcellular location">
    <subcellularLocation>
        <location evidence="1">Plastid</location>
        <location evidence="1">Chloroplast thylakoid membrane</location>
        <topology evidence="1">Peripheral membrane protein</topology>
    </subcellularLocation>
</comment>
<comment type="similarity">
    <text evidence="1">Belongs to the complex I 23 kDa subunit family.</text>
</comment>
<keyword id="KW-0004">4Fe-4S</keyword>
<keyword id="KW-0150">Chloroplast</keyword>
<keyword id="KW-0408">Iron</keyword>
<keyword id="KW-0411">Iron-sulfur</keyword>
<keyword id="KW-0472">Membrane</keyword>
<keyword id="KW-0479">Metal-binding</keyword>
<keyword id="KW-0520">NAD</keyword>
<keyword id="KW-0521">NADP</keyword>
<keyword id="KW-0934">Plastid</keyword>
<keyword id="KW-0618">Plastoquinone</keyword>
<keyword id="KW-0874">Quinone</keyword>
<keyword id="KW-0677">Repeat</keyword>
<keyword id="KW-0793">Thylakoid</keyword>
<keyword id="KW-1278">Translocase</keyword>
<sequence>MFPMVTEFMNYGQQTVRAARYIGQGFMITLSHANRLPVTIQYPYEKLITSERFRGRIHFEFDKCIACEVCVRVCPIDLPVVDWKLETDIRKKRLLNYSIDFGICIFCGNCVEYCPTNCLSMTEEYELSTYDRHELNYNQIALGRLPMSIIDDYTIRTILNLPEIKT</sequence>